<keyword id="KW-0010">Activator</keyword>
<keyword id="KW-0175">Coiled coil</keyword>
<keyword id="KW-0539">Nucleus</keyword>
<keyword id="KW-1185">Reference proteome</keyword>
<keyword id="KW-0804">Transcription</keyword>
<keyword id="KW-0805">Transcription regulation</keyword>
<dbReference type="EMBL" id="AE016814">
    <property type="protein sequence ID" value="AAS50317.1"/>
    <property type="status" value="ALT_INIT"/>
    <property type="molecule type" value="Genomic_DNA"/>
</dbReference>
<dbReference type="RefSeq" id="NP_982493.1">
    <property type="nucleotide sequence ID" value="NM_207846.1"/>
</dbReference>
<dbReference type="SMR" id="Q75EX7"/>
<dbReference type="FunCoup" id="Q75EX7">
    <property type="interactions" value="313"/>
</dbReference>
<dbReference type="STRING" id="284811.Q75EX7"/>
<dbReference type="GeneID" id="4618672"/>
<dbReference type="KEGG" id="ago:AGOS_AAL049C"/>
<dbReference type="eggNOG" id="KOG1510">
    <property type="taxonomic scope" value="Eukaryota"/>
</dbReference>
<dbReference type="InParanoid" id="Q75EX7"/>
<dbReference type="OrthoDB" id="526653at2759"/>
<dbReference type="Proteomes" id="UP000000591">
    <property type="component" value="Chromosome I"/>
</dbReference>
<dbReference type="GO" id="GO:0016592">
    <property type="term" value="C:mediator complex"/>
    <property type="evidence" value="ECO:0000318"/>
    <property type="project" value="GO_Central"/>
</dbReference>
<dbReference type="GO" id="GO:0003712">
    <property type="term" value="F:transcription coregulator activity"/>
    <property type="evidence" value="ECO:0000318"/>
    <property type="project" value="GO_Central"/>
</dbReference>
<dbReference type="GO" id="GO:0006357">
    <property type="term" value="P:regulation of transcription by RNA polymerase II"/>
    <property type="evidence" value="ECO:0000318"/>
    <property type="project" value="GO_Central"/>
</dbReference>
<dbReference type="Gene3D" id="6.10.280.10">
    <property type="entry name" value="Mediator complex, subunit Med21"/>
    <property type="match status" value="1"/>
</dbReference>
<dbReference type="InterPro" id="IPR037212">
    <property type="entry name" value="Med7/Med21-like"/>
</dbReference>
<dbReference type="InterPro" id="IPR021384">
    <property type="entry name" value="Mediator_Med21"/>
</dbReference>
<dbReference type="PANTHER" id="PTHR13381:SF0">
    <property type="entry name" value="MEDIATOR OF RNA POLYMERASE II TRANSCRIPTION SUBUNIT 21"/>
    <property type="match status" value="1"/>
</dbReference>
<dbReference type="PANTHER" id="PTHR13381">
    <property type="entry name" value="RNA POLYMERASE II HOLOENZYME COMPONENT SRB7"/>
    <property type="match status" value="1"/>
</dbReference>
<dbReference type="Pfam" id="PF11221">
    <property type="entry name" value="Med21"/>
    <property type="match status" value="1"/>
</dbReference>
<dbReference type="SUPFAM" id="SSF140718">
    <property type="entry name" value="Mediator hinge subcomplex-like"/>
    <property type="match status" value="1"/>
</dbReference>
<name>MED21_EREGS</name>
<evidence type="ECO:0000250" key="1"/>
<evidence type="ECO:0000255" key="2"/>
<evidence type="ECO:0000305" key="3"/>
<gene>
    <name type="primary">SRB7</name>
    <name type="synonym">MED21</name>
    <name type="ordered locus">AAL049C</name>
</gene>
<sequence>MTDRLTQLQQCLDQIVEQFGSAITYVDRNHDFEPHNELEDKLSDPQATIAAAEDFDRNIDELTTDMILKTRQIIKLIDSLPGVDVSAEEQLSRIDSLQKKLIQVEGEKIEAIKRKESLTKDIEELINEFTEGIANSRRLNKA</sequence>
<proteinExistence type="inferred from homology"/>
<comment type="function">
    <text evidence="1">Component of the Mediator complex, a coactivator involved in the regulated transcription of nearly all RNA polymerase II-dependent genes. Mediator functions as a bridge to convey information from gene-specific regulatory proteins to the basal RNA polymerase II transcription machinery. Mediator is recruited to promoters by direct interactions with regulatory proteins and serves as a scaffold for the assembly of a functional preinitiation complex with RNA polymerase II and the general transcription factors (By similarity).</text>
</comment>
<comment type="subunit">
    <text evidence="1">Component of the Mediator complex.</text>
</comment>
<comment type="subcellular location">
    <subcellularLocation>
        <location evidence="1">Nucleus</location>
    </subcellularLocation>
</comment>
<comment type="similarity">
    <text evidence="3">Belongs to the Mediator complex subunit 21 family.</text>
</comment>
<comment type="sequence caution" evidence="3">
    <conflict type="erroneous initiation">
        <sequence resource="EMBL-CDS" id="AAS50317"/>
    </conflict>
</comment>
<accession>Q75EX7</accession>
<protein>
    <recommendedName>
        <fullName>Mediator of RNA polymerase II transcription subunit 21</fullName>
    </recommendedName>
    <alternativeName>
        <fullName>Mediator complex subunit 21</fullName>
    </alternativeName>
</protein>
<reference key="1">
    <citation type="journal article" date="2004" name="Science">
        <title>The Ashbya gossypii genome as a tool for mapping the ancient Saccharomyces cerevisiae genome.</title>
        <authorList>
            <person name="Dietrich F.S."/>
            <person name="Voegeli S."/>
            <person name="Brachat S."/>
            <person name="Lerch A."/>
            <person name="Gates K."/>
            <person name="Steiner S."/>
            <person name="Mohr C."/>
            <person name="Poehlmann R."/>
            <person name="Luedi P."/>
            <person name="Choi S."/>
            <person name="Wing R.A."/>
            <person name="Flavier A."/>
            <person name="Gaffney T.D."/>
            <person name="Philippsen P."/>
        </authorList>
    </citation>
    <scope>NUCLEOTIDE SEQUENCE [LARGE SCALE GENOMIC DNA]</scope>
    <source>
        <strain>ATCC 10895 / CBS 109.51 / FGSC 9923 / NRRL Y-1056</strain>
    </source>
</reference>
<reference key="2">
    <citation type="journal article" date="2013" name="G3 (Bethesda)">
        <title>Genomes of Ashbya fungi isolated from insects reveal four mating-type loci, numerous translocations, lack of transposons, and distinct gene duplications.</title>
        <authorList>
            <person name="Dietrich F.S."/>
            <person name="Voegeli S."/>
            <person name="Kuo S."/>
            <person name="Philippsen P."/>
        </authorList>
    </citation>
    <scope>GENOME REANNOTATION</scope>
    <source>
        <strain>ATCC 10895 / CBS 109.51 / FGSC 9923 / NRRL Y-1056</strain>
    </source>
</reference>
<organism>
    <name type="scientific">Eremothecium gossypii (strain ATCC 10895 / CBS 109.51 / FGSC 9923 / NRRL Y-1056)</name>
    <name type="common">Yeast</name>
    <name type="synonym">Ashbya gossypii</name>
    <dbReference type="NCBI Taxonomy" id="284811"/>
    <lineage>
        <taxon>Eukaryota</taxon>
        <taxon>Fungi</taxon>
        <taxon>Dikarya</taxon>
        <taxon>Ascomycota</taxon>
        <taxon>Saccharomycotina</taxon>
        <taxon>Saccharomycetes</taxon>
        <taxon>Saccharomycetales</taxon>
        <taxon>Saccharomycetaceae</taxon>
        <taxon>Eremothecium</taxon>
    </lineage>
</organism>
<feature type="chain" id="PRO_0000305955" description="Mediator of RNA polymerase II transcription subunit 21">
    <location>
        <begin position="1"/>
        <end position="142"/>
    </location>
</feature>
<feature type="coiled-coil region" evidence="2">
    <location>
        <begin position="87"/>
        <end position="131"/>
    </location>
</feature>